<sequence length="399" mass="43725">MGNHALIKQINKLLILKTILDHRTISRAKISKLVDLNKATVSNLTDELIKEGFVIEKGYGHSKGGRRPVLLEVNKNVGLIIGIDLGVNYIHLVLTNFIGEIIWERNMAIKLGEKQEKILESLFIILEEAIKAAPPTQKGILGIGIGVPGIVEKNSGTVLLAPNLKWQDVPLKRMVESRFGLPVYIDNEANAGALGEKWFGGWGDVSHLLYVSVGIGIGAGIVIGEEVYRGAKGFAGEVGHMTIDFNDDVCSCGNVGCLENFASERALLSLIKTLVESGVEDEYINRDTVEEMDAGYIIQSALQRSRVAMNAITDIANKLGIGIANLVNIFNPDIVVIGNKASFMGDLFLEELRRIVYKRAFITQYHHVRVEVSKLKDRACVLGCVAMVISDMLAFPDYV</sequence>
<evidence type="ECO:0000250" key="1"/>
<evidence type="ECO:0000305" key="2"/>
<protein>
    <recommendedName>
        <fullName>Putative xylose repressor</fullName>
    </recommendedName>
</protein>
<name>XYLR_CALSR</name>
<organism>
    <name type="scientific">Caldicellulosiruptor sp. (strain Rt8B.4)</name>
    <dbReference type="NCBI Taxonomy" id="28238"/>
    <lineage>
        <taxon>Bacteria</taxon>
        <taxon>Bacillati</taxon>
        <taxon>Bacillota</taxon>
        <taxon>Bacillota incertae sedis</taxon>
        <taxon>Caldicellulosiruptorales</taxon>
        <taxon>Caldicellulosiruptoraceae</taxon>
        <taxon>Caldicellulosiruptor</taxon>
    </lineage>
</organism>
<feature type="chain" id="PRO_0000095712" description="Putative xylose repressor">
    <location>
        <begin position="1"/>
        <end position="399"/>
    </location>
</feature>
<feature type="DNA-binding region" description="H-T-H motif" evidence="1">
    <location>
        <begin position="27"/>
        <end position="46"/>
    </location>
</feature>
<comment type="function">
    <text evidence="1">Transcriptional repressor of xylose-utilizing enzymes.</text>
</comment>
<comment type="similarity">
    <text evidence="2">Belongs to the ROK (NagC/XylR) family.</text>
</comment>
<dbReference type="EMBL" id="L18965">
    <property type="protein sequence ID" value="AAB42043.1"/>
    <property type="molecule type" value="Genomic_DNA"/>
</dbReference>
<dbReference type="PIR" id="S41787">
    <property type="entry name" value="S41787"/>
</dbReference>
<dbReference type="SMR" id="P40981"/>
<dbReference type="GO" id="GO:0003677">
    <property type="term" value="F:DNA binding"/>
    <property type="evidence" value="ECO:0007669"/>
    <property type="project" value="UniProtKB-KW"/>
</dbReference>
<dbReference type="GO" id="GO:0003700">
    <property type="term" value="F:DNA-binding transcription factor activity"/>
    <property type="evidence" value="ECO:0007669"/>
    <property type="project" value="InterPro"/>
</dbReference>
<dbReference type="GO" id="GO:0042732">
    <property type="term" value="P:D-xylose metabolic process"/>
    <property type="evidence" value="ECO:0007669"/>
    <property type="project" value="UniProtKB-KW"/>
</dbReference>
<dbReference type="CDD" id="cd24076">
    <property type="entry name" value="ASKHA_ATPase_ROK_BsXylR-like"/>
    <property type="match status" value="1"/>
</dbReference>
<dbReference type="Gene3D" id="3.30.420.40">
    <property type="match status" value="2"/>
</dbReference>
<dbReference type="Gene3D" id="1.10.10.10">
    <property type="entry name" value="Winged helix-like DNA-binding domain superfamily/Winged helix DNA-binding domain"/>
    <property type="match status" value="1"/>
</dbReference>
<dbReference type="InterPro" id="IPR043129">
    <property type="entry name" value="ATPase_NBD"/>
</dbReference>
<dbReference type="InterPro" id="IPR000835">
    <property type="entry name" value="HTH_MarR-typ"/>
</dbReference>
<dbReference type="InterPro" id="IPR000600">
    <property type="entry name" value="ROK"/>
</dbReference>
<dbReference type="InterPro" id="IPR049874">
    <property type="entry name" value="ROK_cs"/>
</dbReference>
<dbReference type="InterPro" id="IPR036388">
    <property type="entry name" value="WH-like_DNA-bd_sf"/>
</dbReference>
<dbReference type="InterPro" id="IPR036390">
    <property type="entry name" value="WH_DNA-bd_sf"/>
</dbReference>
<dbReference type="PANTHER" id="PTHR18964:SF149">
    <property type="entry name" value="BIFUNCTIONAL UDP-N-ACETYLGLUCOSAMINE 2-EPIMERASE_N-ACETYLMANNOSAMINE KINASE"/>
    <property type="match status" value="1"/>
</dbReference>
<dbReference type="PANTHER" id="PTHR18964">
    <property type="entry name" value="ROK (REPRESSOR, ORF, KINASE) FAMILY"/>
    <property type="match status" value="1"/>
</dbReference>
<dbReference type="Pfam" id="PF01047">
    <property type="entry name" value="MarR"/>
    <property type="match status" value="1"/>
</dbReference>
<dbReference type="Pfam" id="PF00480">
    <property type="entry name" value="ROK"/>
    <property type="match status" value="1"/>
</dbReference>
<dbReference type="SUPFAM" id="SSF53067">
    <property type="entry name" value="Actin-like ATPase domain"/>
    <property type="match status" value="1"/>
</dbReference>
<dbReference type="SUPFAM" id="SSF46785">
    <property type="entry name" value="Winged helix' DNA-binding domain"/>
    <property type="match status" value="1"/>
</dbReference>
<dbReference type="PROSITE" id="PS01125">
    <property type="entry name" value="ROK"/>
    <property type="match status" value="1"/>
</dbReference>
<gene>
    <name type="primary">xylR</name>
</gene>
<reference key="1">
    <citation type="journal article" date="1996" name="Appl. Microbiol. Biotechnol.">
        <title>Cloning, sequencing and overexpression in Escherichia coli of a xylanase gene, xynA from the thermophilic bacterium Rt8B.4 genus Caldicellulosiruptor.</title>
        <authorList>
            <person name="Dwivedi P.P."/>
            <person name="Gibbs M.D."/>
            <person name="Saul D.J."/>
            <person name="Bergquist P.L."/>
        </authorList>
    </citation>
    <scope>NUCLEOTIDE SEQUENCE [GENOMIC DNA]</scope>
</reference>
<accession>P40981</accession>
<keyword id="KW-0119">Carbohydrate metabolism</keyword>
<keyword id="KW-0238">DNA-binding</keyword>
<keyword id="KW-0678">Repressor</keyword>
<keyword id="KW-0804">Transcription</keyword>
<keyword id="KW-0805">Transcription regulation</keyword>
<keyword id="KW-0859">Xylose metabolism</keyword>
<proteinExistence type="inferred from homology"/>